<proteinExistence type="inferred from homology"/>
<organism>
    <name type="scientific">Staphylococcus aureus (strain USA300)</name>
    <dbReference type="NCBI Taxonomy" id="367830"/>
    <lineage>
        <taxon>Bacteria</taxon>
        <taxon>Bacillati</taxon>
        <taxon>Bacillota</taxon>
        <taxon>Bacilli</taxon>
        <taxon>Bacillales</taxon>
        <taxon>Staphylococcaceae</taxon>
        <taxon>Staphylococcus</taxon>
    </lineage>
</organism>
<feature type="chain" id="PRO_0000313449" description="DNA ligase">
    <location>
        <begin position="1"/>
        <end position="667"/>
    </location>
</feature>
<feature type="domain" description="BRCT" evidence="1">
    <location>
        <begin position="586"/>
        <end position="667"/>
    </location>
</feature>
<feature type="active site" description="N6-AMP-lysine intermediate" evidence="1">
    <location>
        <position position="112"/>
    </location>
</feature>
<feature type="binding site" evidence="1">
    <location>
        <begin position="32"/>
        <end position="36"/>
    </location>
    <ligand>
        <name>NAD(+)</name>
        <dbReference type="ChEBI" id="CHEBI:57540"/>
    </ligand>
</feature>
<feature type="binding site" evidence="1">
    <location>
        <begin position="81"/>
        <end position="82"/>
    </location>
    <ligand>
        <name>NAD(+)</name>
        <dbReference type="ChEBI" id="CHEBI:57540"/>
    </ligand>
</feature>
<feature type="binding site" evidence="1">
    <location>
        <position position="110"/>
    </location>
    <ligand>
        <name>NAD(+)</name>
        <dbReference type="ChEBI" id="CHEBI:57540"/>
    </ligand>
</feature>
<feature type="binding site" evidence="1">
    <location>
        <position position="133"/>
    </location>
    <ligand>
        <name>NAD(+)</name>
        <dbReference type="ChEBI" id="CHEBI:57540"/>
    </ligand>
</feature>
<feature type="binding site" evidence="1">
    <location>
        <position position="167"/>
    </location>
    <ligand>
        <name>NAD(+)</name>
        <dbReference type="ChEBI" id="CHEBI:57540"/>
    </ligand>
</feature>
<feature type="binding site" evidence="1">
    <location>
        <position position="283"/>
    </location>
    <ligand>
        <name>NAD(+)</name>
        <dbReference type="ChEBI" id="CHEBI:57540"/>
    </ligand>
</feature>
<feature type="binding site" evidence="1">
    <location>
        <position position="307"/>
    </location>
    <ligand>
        <name>NAD(+)</name>
        <dbReference type="ChEBI" id="CHEBI:57540"/>
    </ligand>
</feature>
<feature type="binding site" evidence="1">
    <location>
        <position position="401"/>
    </location>
    <ligand>
        <name>Zn(2+)</name>
        <dbReference type="ChEBI" id="CHEBI:29105"/>
    </ligand>
</feature>
<feature type="binding site" evidence="1">
    <location>
        <position position="404"/>
    </location>
    <ligand>
        <name>Zn(2+)</name>
        <dbReference type="ChEBI" id="CHEBI:29105"/>
    </ligand>
</feature>
<feature type="binding site" evidence="1">
    <location>
        <position position="419"/>
    </location>
    <ligand>
        <name>Zn(2+)</name>
        <dbReference type="ChEBI" id="CHEBI:29105"/>
    </ligand>
</feature>
<feature type="binding site" evidence="1">
    <location>
        <position position="424"/>
    </location>
    <ligand>
        <name>Zn(2+)</name>
        <dbReference type="ChEBI" id="CHEBI:29105"/>
    </ligand>
</feature>
<sequence>MADLSSRVNELHDLLNQYSYEYYVEDNPSVPDSEYDKLLHELIKIEEEHPEYKTVDSPTVRVGGEAQASFNKVNHDTPMLSLGNAFNEDDLRKFDQRIREQIGNVEYMCELKIDGLAVSLKYVDGYFVQGLTRGDGTTGEDITENLKTIHAIPLKMKEPLNVEVRGEAYMPRRSFLRLNEEKEKNDEQLFANPRNAAAGSLRQLDSKLTAKRKLSVFIYSVNDFTDFNARSQSEALDELDKLGFTTNKNRARVNNIDGVLEYIEKWTSQRESLPYDIDGIVIKVNDLDQQDEMGFTQKSPRWAIAYKFPAEEVVTKLLDIELSIGRTGVVTPTAILEPVKVAGTTVSRASLHNEDLIHDRDIRIGDSVVVKKAGDIIPEVVRSIPERRPEDAVTYHMPTHCPSCGHELVRIEGEVALRCINPKCQAQLVEGLIHFVSRQAMNIDGLGTKIIQQLYQSELIKDVADIFYLTEEDLLPLDRMGQKKVDNLLAAIQQAKDNSLENLLFGLGIRHLGVKASQVLAEKYETIDRLLTVTEAELVEIHDIGDKVAQSVVTYLENEDIRALIQKLKDKHVNMIYKGIKTSDIEGHPEFSGKTIVLTGKLHQMTRNEASKWLASQGAKVTSSVTKNTDVVIAGEDAGSKLTKAQSLGIEIWTEQQFVDKQNELNS</sequence>
<comment type="function">
    <text evidence="1">DNA ligase that catalyzes the formation of phosphodiester linkages between 5'-phosphoryl and 3'-hydroxyl groups in double-stranded DNA using NAD as a coenzyme and as the energy source for the reaction. It is essential for DNA replication and repair of damaged DNA.</text>
</comment>
<comment type="catalytic activity">
    <reaction evidence="1">
        <text>NAD(+) + (deoxyribonucleotide)n-3'-hydroxyl + 5'-phospho-(deoxyribonucleotide)m = (deoxyribonucleotide)n+m + AMP + beta-nicotinamide D-nucleotide.</text>
        <dbReference type="EC" id="6.5.1.2"/>
    </reaction>
</comment>
<comment type="cofactor">
    <cofactor evidence="1">
        <name>Mg(2+)</name>
        <dbReference type="ChEBI" id="CHEBI:18420"/>
    </cofactor>
    <cofactor evidence="1">
        <name>Mn(2+)</name>
        <dbReference type="ChEBI" id="CHEBI:29035"/>
    </cofactor>
</comment>
<comment type="similarity">
    <text evidence="1">Belongs to the NAD-dependent DNA ligase family. LigA subfamily.</text>
</comment>
<reference key="1">
    <citation type="journal article" date="2006" name="Lancet">
        <title>Complete genome sequence of USA300, an epidemic clone of community-acquired meticillin-resistant Staphylococcus aureus.</title>
        <authorList>
            <person name="Diep B.A."/>
            <person name="Gill S.R."/>
            <person name="Chang R.F."/>
            <person name="Phan T.H."/>
            <person name="Chen J.H."/>
            <person name="Davidson M.G."/>
            <person name="Lin F."/>
            <person name="Lin J."/>
            <person name="Carleton H.A."/>
            <person name="Mongodin E.F."/>
            <person name="Sensabaugh G.F."/>
            <person name="Perdreau-Remington F."/>
        </authorList>
    </citation>
    <scope>NUCLEOTIDE SEQUENCE [LARGE SCALE GENOMIC DNA]</scope>
    <source>
        <strain>USA300</strain>
    </source>
</reference>
<gene>
    <name evidence="1" type="primary">ligA</name>
    <name type="ordered locus">SAUSA300_1885</name>
</gene>
<keyword id="KW-0227">DNA damage</keyword>
<keyword id="KW-0234">DNA repair</keyword>
<keyword id="KW-0235">DNA replication</keyword>
<keyword id="KW-0436">Ligase</keyword>
<keyword id="KW-0460">Magnesium</keyword>
<keyword id="KW-0464">Manganese</keyword>
<keyword id="KW-0479">Metal-binding</keyword>
<keyword id="KW-0520">NAD</keyword>
<keyword id="KW-0862">Zinc</keyword>
<accession>Q2FFJ1</accession>
<dbReference type="EC" id="6.5.1.2" evidence="1"/>
<dbReference type="EMBL" id="CP000255">
    <property type="protein sequence ID" value="ABD21973.1"/>
    <property type="molecule type" value="Genomic_DNA"/>
</dbReference>
<dbReference type="RefSeq" id="WP_000774565.1">
    <property type="nucleotide sequence ID" value="NZ_CP027476.1"/>
</dbReference>
<dbReference type="SMR" id="Q2FFJ1"/>
<dbReference type="KEGG" id="saa:SAUSA300_1885"/>
<dbReference type="HOGENOM" id="CLU_007764_2_1_9"/>
<dbReference type="OMA" id="HDVEHEI"/>
<dbReference type="Proteomes" id="UP000001939">
    <property type="component" value="Chromosome"/>
</dbReference>
<dbReference type="GO" id="GO:0005829">
    <property type="term" value="C:cytosol"/>
    <property type="evidence" value="ECO:0007669"/>
    <property type="project" value="TreeGrafter"/>
</dbReference>
<dbReference type="GO" id="GO:0003677">
    <property type="term" value="F:DNA binding"/>
    <property type="evidence" value="ECO:0007669"/>
    <property type="project" value="InterPro"/>
</dbReference>
<dbReference type="GO" id="GO:0003911">
    <property type="term" value="F:DNA ligase (NAD+) activity"/>
    <property type="evidence" value="ECO:0007669"/>
    <property type="project" value="UniProtKB-UniRule"/>
</dbReference>
<dbReference type="GO" id="GO:0046872">
    <property type="term" value="F:metal ion binding"/>
    <property type="evidence" value="ECO:0007669"/>
    <property type="project" value="UniProtKB-KW"/>
</dbReference>
<dbReference type="GO" id="GO:0006281">
    <property type="term" value="P:DNA repair"/>
    <property type="evidence" value="ECO:0007669"/>
    <property type="project" value="UniProtKB-KW"/>
</dbReference>
<dbReference type="GO" id="GO:0006260">
    <property type="term" value="P:DNA replication"/>
    <property type="evidence" value="ECO:0007669"/>
    <property type="project" value="UniProtKB-KW"/>
</dbReference>
<dbReference type="CDD" id="cd17748">
    <property type="entry name" value="BRCT_DNA_ligase_like"/>
    <property type="match status" value="1"/>
</dbReference>
<dbReference type="CDD" id="cd00114">
    <property type="entry name" value="LIGANc"/>
    <property type="match status" value="1"/>
</dbReference>
<dbReference type="FunFam" id="1.10.150.20:FF:000006">
    <property type="entry name" value="DNA ligase"/>
    <property type="match status" value="1"/>
</dbReference>
<dbReference type="FunFam" id="1.10.150.20:FF:000007">
    <property type="entry name" value="DNA ligase"/>
    <property type="match status" value="1"/>
</dbReference>
<dbReference type="FunFam" id="1.10.287.610:FF:000005">
    <property type="entry name" value="DNA ligase"/>
    <property type="match status" value="1"/>
</dbReference>
<dbReference type="FunFam" id="2.40.50.140:FF:000012">
    <property type="entry name" value="DNA ligase"/>
    <property type="match status" value="1"/>
</dbReference>
<dbReference type="FunFam" id="3.30.470.30:FF:000001">
    <property type="entry name" value="DNA ligase"/>
    <property type="match status" value="1"/>
</dbReference>
<dbReference type="FunFam" id="3.40.50.10190:FF:000045">
    <property type="entry name" value="DNA ligase"/>
    <property type="match status" value="1"/>
</dbReference>
<dbReference type="FunFam" id="6.20.10.30:FF:000002">
    <property type="entry name" value="DNA ligase"/>
    <property type="match status" value="1"/>
</dbReference>
<dbReference type="Gene3D" id="6.20.10.30">
    <property type="match status" value="1"/>
</dbReference>
<dbReference type="Gene3D" id="1.10.150.20">
    <property type="entry name" value="5' to 3' exonuclease, C-terminal subdomain"/>
    <property type="match status" value="2"/>
</dbReference>
<dbReference type="Gene3D" id="3.40.50.10190">
    <property type="entry name" value="BRCT domain"/>
    <property type="match status" value="1"/>
</dbReference>
<dbReference type="Gene3D" id="3.30.470.30">
    <property type="entry name" value="DNA ligase/mRNA capping enzyme"/>
    <property type="match status" value="1"/>
</dbReference>
<dbReference type="Gene3D" id="1.10.287.610">
    <property type="entry name" value="Helix hairpin bin"/>
    <property type="match status" value="1"/>
</dbReference>
<dbReference type="Gene3D" id="2.40.50.140">
    <property type="entry name" value="Nucleic acid-binding proteins"/>
    <property type="match status" value="1"/>
</dbReference>
<dbReference type="HAMAP" id="MF_01588">
    <property type="entry name" value="DNA_ligase_A"/>
    <property type="match status" value="1"/>
</dbReference>
<dbReference type="InterPro" id="IPR001357">
    <property type="entry name" value="BRCT_dom"/>
</dbReference>
<dbReference type="InterPro" id="IPR036420">
    <property type="entry name" value="BRCT_dom_sf"/>
</dbReference>
<dbReference type="InterPro" id="IPR041663">
    <property type="entry name" value="DisA/LigA_HHH"/>
</dbReference>
<dbReference type="InterPro" id="IPR001679">
    <property type="entry name" value="DNA_ligase"/>
</dbReference>
<dbReference type="InterPro" id="IPR018239">
    <property type="entry name" value="DNA_ligase_AS"/>
</dbReference>
<dbReference type="InterPro" id="IPR033136">
    <property type="entry name" value="DNA_ligase_CS"/>
</dbReference>
<dbReference type="InterPro" id="IPR013839">
    <property type="entry name" value="DNAligase_adenylation"/>
</dbReference>
<dbReference type="InterPro" id="IPR013840">
    <property type="entry name" value="DNAligase_N"/>
</dbReference>
<dbReference type="InterPro" id="IPR003583">
    <property type="entry name" value="Hlx-hairpin-Hlx_DNA-bd_motif"/>
</dbReference>
<dbReference type="InterPro" id="IPR012340">
    <property type="entry name" value="NA-bd_OB-fold"/>
</dbReference>
<dbReference type="InterPro" id="IPR004150">
    <property type="entry name" value="NAD_DNA_ligase_OB"/>
</dbReference>
<dbReference type="InterPro" id="IPR010994">
    <property type="entry name" value="RuvA_2-like"/>
</dbReference>
<dbReference type="InterPro" id="IPR004149">
    <property type="entry name" value="Znf_DNAligase_C4"/>
</dbReference>
<dbReference type="NCBIfam" id="TIGR00575">
    <property type="entry name" value="dnlj"/>
    <property type="match status" value="1"/>
</dbReference>
<dbReference type="NCBIfam" id="NF005932">
    <property type="entry name" value="PRK07956.1"/>
    <property type="match status" value="1"/>
</dbReference>
<dbReference type="PANTHER" id="PTHR23389">
    <property type="entry name" value="CHROMOSOME TRANSMISSION FIDELITY FACTOR 18"/>
    <property type="match status" value="1"/>
</dbReference>
<dbReference type="PANTHER" id="PTHR23389:SF9">
    <property type="entry name" value="DNA LIGASE"/>
    <property type="match status" value="1"/>
</dbReference>
<dbReference type="Pfam" id="PF00533">
    <property type="entry name" value="BRCT"/>
    <property type="match status" value="1"/>
</dbReference>
<dbReference type="Pfam" id="PF01653">
    <property type="entry name" value="DNA_ligase_aden"/>
    <property type="match status" value="1"/>
</dbReference>
<dbReference type="Pfam" id="PF03120">
    <property type="entry name" value="DNA_ligase_OB"/>
    <property type="match status" value="1"/>
</dbReference>
<dbReference type="Pfam" id="PF03119">
    <property type="entry name" value="DNA_ligase_ZBD"/>
    <property type="match status" value="1"/>
</dbReference>
<dbReference type="Pfam" id="PF12826">
    <property type="entry name" value="HHH_2"/>
    <property type="match status" value="1"/>
</dbReference>
<dbReference type="PIRSF" id="PIRSF001604">
    <property type="entry name" value="LigA"/>
    <property type="match status" value="1"/>
</dbReference>
<dbReference type="SMART" id="SM00292">
    <property type="entry name" value="BRCT"/>
    <property type="match status" value="1"/>
</dbReference>
<dbReference type="SMART" id="SM00278">
    <property type="entry name" value="HhH1"/>
    <property type="match status" value="3"/>
</dbReference>
<dbReference type="SMART" id="SM00532">
    <property type="entry name" value="LIGANc"/>
    <property type="match status" value="1"/>
</dbReference>
<dbReference type="SUPFAM" id="SSF52113">
    <property type="entry name" value="BRCT domain"/>
    <property type="match status" value="1"/>
</dbReference>
<dbReference type="SUPFAM" id="SSF56091">
    <property type="entry name" value="DNA ligase/mRNA capping enzyme, catalytic domain"/>
    <property type="match status" value="1"/>
</dbReference>
<dbReference type="SUPFAM" id="SSF50249">
    <property type="entry name" value="Nucleic acid-binding proteins"/>
    <property type="match status" value="1"/>
</dbReference>
<dbReference type="SUPFAM" id="SSF47781">
    <property type="entry name" value="RuvA domain 2-like"/>
    <property type="match status" value="1"/>
</dbReference>
<dbReference type="PROSITE" id="PS50172">
    <property type="entry name" value="BRCT"/>
    <property type="match status" value="1"/>
</dbReference>
<dbReference type="PROSITE" id="PS01055">
    <property type="entry name" value="DNA_LIGASE_N1"/>
    <property type="match status" value="1"/>
</dbReference>
<dbReference type="PROSITE" id="PS01056">
    <property type="entry name" value="DNA_LIGASE_N2"/>
    <property type="match status" value="1"/>
</dbReference>
<evidence type="ECO:0000255" key="1">
    <source>
        <dbReference type="HAMAP-Rule" id="MF_01588"/>
    </source>
</evidence>
<name>DNLJ_STAA3</name>
<protein>
    <recommendedName>
        <fullName evidence="1">DNA ligase</fullName>
        <ecNumber evidence="1">6.5.1.2</ecNumber>
    </recommendedName>
    <alternativeName>
        <fullName evidence="1">Polydeoxyribonucleotide synthase [NAD(+)]</fullName>
    </alternativeName>
</protein>